<proteinExistence type="inferred from homology"/>
<protein>
    <recommendedName>
        <fullName>Tumor necrosis factor</fullName>
    </recommendedName>
    <alternativeName>
        <fullName>Cachectin</fullName>
    </alternativeName>
    <alternativeName>
        <fullName>TNF-alpha</fullName>
    </alternativeName>
    <alternativeName>
        <fullName>Tumor necrosis factor ligand superfamily member 2</fullName>
        <shortName>TNF-a</shortName>
    </alternativeName>
    <component>
        <recommendedName>
            <fullName>Tumor necrosis factor, membrane form</fullName>
        </recommendedName>
        <alternativeName>
            <fullName>N-terminal fragment</fullName>
            <shortName>NTF</shortName>
        </alternativeName>
    </component>
    <component>
        <recommendedName>
            <fullName>Intracellular domain 1</fullName>
            <shortName>ICD1</shortName>
        </recommendedName>
    </component>
    <component>
        <recommendedName>
            <fullName>Intracellular domain 2</fullName>
            <shortName>ICD2</shortName>
        </recommendedName>
    </component>
    <component>
        <recommendedName>
            <fullName>C-domain 1</fullName>
        </recommendedName>
    </component>
    <component>
        <recommendedName>
            <fullName>C-domain 2</fullName>
        </recommendedName>
    </component>
    <component>
        <recommendedName>
            <fullName>Tumor necrosis factor, soluble form</fullName>
        </recommendedName>
    </component>
</protein>
<organism>
    <name type="scientific">Pan troglodytes</name>
    <name type="common">Chimpanzee</name>
    <dbReference type="NCBI Taxonomy" id="9598"/>
    <lineage>
        <taxon>Eukaryota</taxon>
        <taxon>Metazoa</taxon>
        <taxon>Chordata</taxon>
        <taxon>Craniata</taxon>
        <taxon>Vertebrata</taxon>
        <taxon>Euteleostomi</taxon>
        <taxon>Mammalia</taxon>
        <taxon>Eutheria</taxon>
        <taxon>Euarchontoglires</taxon>
        <taxon>Primates</taxon>
        <taxon>Haplorrhini</taxon>
        <taxon>Catarrhini</taxon>
        <taxon>Hominidae</taxon>
        <taxon>Pan</taxon>
    </lineage>
</organism>
<dbReference type="EMBL" id="AB054536">
    <property type="protein sequence ID" value="BAB83882.1"/>
    <property type="molecule type" value="Genomic_DNA"/>
</dbReference>
<dbReference type="EMBL" id="BA000041">
    <property type="protein sequence ID" value="BAC78157.1"/>
    <property type="molecule type" value="Genomic_DNA"/>
</dbReference>
<dbReference type="EMBL" id="AB210165">
    <property type="protein sequence ID" value="BAE92772.1"/>
    <property type="molecule type" value="Genomic_DNA"/>
</dbReference>
<dbReference type="EMBL" id="AB210166">
    <property type="protein sequence ID" value="BAE92774.1"/>
    <property type="molecule type" value="Genomic_DNA"/>
</dbReference>
<dbReference type="EMBL" id="AY091964">
    <property type="protein sequence ID" value="AAM76582.1"/>
    <property type="molecule type" value="Genomic_DNA"/>
</dbReference>
<dbReference type="RefSeq" id="NP_001038976.1">
    <property type="nucleotide sequence ID" value="NM_001045511.1"/>
</dbReference>
<dbReference type="RefSeq" id="XP_016810226.1">
    <property type="nucleotide sequence ID" value="XM_016954737.1"/>
</dbReference>
<dbReference type="SMR" id="Q8HZD9"/>
<dbReference type="FunCoup" id="Q8HZD9">
    <property type="interactions" value="1629"/>
</dbReference>
<dbReference type="STRING" id="9598.ENSPTRP00000069905"/>
<dbReference type="GlyCosmos" id="Q8HZD9">
    <property type="glycosylation" value="1 site, No reported glycans"/>
</dbReference>
<dbReference type="PaxDb" id="9598-ENSPTRP00000054518"/>
<dbReference type="GeneID" id="494186"/>
<dbReference type="KEGG" id="ptr:494186"/>
<dbReference type="CTD" id="7124"/>
<dbReference type="eggNOG" id="ENOG502S4K8">
    <property type="taxonomic scope" value="Eukaryota"/>
</dbReference>
<dbReference type="HOGENOM" id="CLU_070352_3_1_1"/>
<dbReference type="InParanoid" id="Q8HZD9"/>
<dbReference type="OrthoDB" id="5304at9604"/>
<dbReference type="TreeFam" id="TF332169"/>
<dbReference type="Proteomes" id="UP000002277">
    <property type="component" value="Unplaced"/>
</dbReference>
<dbReference type="GO" id="GO:0005615">
    <property type="term" value="C:extracellular space"/>
    <property type="evidence" value="ECO:0000318"/>
    <property type="project" value="GO_Central"/>
</dbReference>
<dbReference type="GO" id="GO:0005886">
    <property type="term" value="C:plasma membrane"/>
    <property type="evidence" value="ECO:0007669"/>
    <property type="project" value="UniProtKB-SubCell"/>
</dbReference>
<dbReference type="GO" id="GO:0005125">
    <property type="term" value="F:cytokine activity"/>
    <property type="evidence" value="ECO:0000318"/>
    <property type="project" value="GO_Central"/>
</dbReference>
<dbReference type="GO" id="GO:0005164">
    <property type="term" value="F:tumor necrosis factor receptor binding"/>
    <property type="evidence" value="ECO:0007669"/>
    <property type="project" value="InterPro"/>
</dbReference>
<dbReference type="GO" id="GO:0008625">
    <property type="term" value="P:extrinsic apoptotic signaling pathway via death domain receptors"/>
    <property type="evidence" value="ECO:0000318"/>
    <property type="project" value="GO_Central"/>
</dbReference>
<dbReference type="GO" id="GO:0006955">
    <property type="term" value="P:immune response"/>
    <property type="evidence" value="ECO:0000318"/>
    <property type="project" value="GO_Central"/>
</dbReference>
<dbReference type="GO" id="GO:0097527">
    <property type="term" value="P:necroptotic signaling pathway"/>
    <property type="evidence" value="ECO:0000250"/>
    <property type="project" value="CAFA"/>
</dbReference>
<dbReference type="GO" id="GO:0043242">
    <property type="term" value="P:negative regulation of protein-containing complex disassembly"/>
    <property type="evidence" value="ECO:0000250"/>
    <property type="project" value="UniProtKB"/>
</dbReference>
<dbReference type="GO" id="GO:0043065">
    <property type="term" value="P:positive regulation of apoptotic process"/>
    <property type="evidence" value="ECO:0000250"/>
    <property type="project" value="UniProtKB"/>
</dbReference>
<dbReference type="GO" id="GO:0043123">
    <property type="term" value="P:positive regulation of canonical NF-kappaB signal transduction"/>
    <property type="evidence" value="ECO:0000318"/>
    <property type="project" value="GO_Central"/>
</dbReference>
<dbReference type="GO" id="GO:2001238">
    <property type="term" value="P:positive regulation of extrinsic apoptotic signaling pathway"/>
    <property type="evidence" value="ECO:0000318"/>
    <property type="project" value="GO_Central"/>
</dbReference>
<dbReference type="GO" id="GO:0043507">
    <property type="term" value="P:positive regulation of JUN kinase activity"/>
    <property type="evidence" value="ECO:0000250"/>
    <property type="project" value="UniProtKB"/>
</dbReference>
<dbReference type="GO" id="GO:0043406">
    <property type="term" value="P:positive regulation of MAP kinase activity"/>
    <property type="evidence" value="ECO:0000250"/>
    <property type="project" value="UniProtKB"/>
</dbReference>
<dbReference type="GO" id="GO:0051092">
    <property type="term" value="P:positive regulation of NF-kappaB transcription factor activity"/>
    <property type="evidence" value="ECO:0000250"/>
    <property type="project" value="UniProtKB"/>
</dbReference>
<dbReference type="GO" id="GO:0001934">
    <property type="term" value="P:positive regulation of protein phosphorylation"/>
    <property type="evidence" value="ECO:0000250"/>
    <property type="project" value="UniProtKB"/>
</dbReference>
<dbReference type="GO" id="GO:0043243">
    <property type="term" value="P:positive regulation of protein-containing complex disassembly"/>
    <property type="evidence" value="ECO:0000250"/>
    <property type="project" value="UniProtKB"/>
</dbReference>
<dbReference type="GO" id="GO:0065008">
    <property type="term" value="P:regulation of biological quality"/>
    <property type="evidence" value="ECO:0007669"/>
    <property type="project" value="UniProtKB-ARBA"/>
</dbReference>
<dbReference type="GO" id="GO:0050793">
    <property type="term" value="P:regulation of developmental process"/>
    <property type="evidence" value="ECO:0007669"/>
    <property type="project" value="UniProtKB-ARBA"/>
</dbReference>
<dbReference type="GO" id="GO:0051239">
    <property type="term" value="P:regulation of multicellular organismal process"/>
    <property type="evidence" value="ECO:0007669"/>
    <property type="project" value="UniProtKB-ARBA"/>
</dbReference>
<dbReference type="GO" id="GO:0051046">
    <property type="term" value="P:regulation of secretion"/>
    <property type="evidence" value="ECO:0007669"/>
    <property type="project" value="UniProtKB-ARBA"/>
</dbReference>
<dbReference type="GO" id="GO:0033209">
    <property type="term" value="P:tumor necrosis factor-mediated signaling pathway"/>
    <property type="evidence" value="ECO:0000318"/>
    <property type="project" value="GO_Central"/>
</dbReference>
<dbReference type="GO" id="GO:0010573">
    <property type="term" value="P:vascular endothelial growth factor production"/>
    <property type="evidence" value="ECO:0000250"/>
    <property type="project" value="UniProtKB"/>
</dbReference>
<dbReference type="CDD" id="cd00184">
    <property type="entry name" value="TNF"/>
    <property type="match status" value="1"/>
</dbReference>
<dbReference type="FunFam" id="2.60.120.40:FF:000007">
    <property type="entry name" value="Tumor necrosis factor"/>
    <property type="match status" value="1"/>
</dbReference>
<dbReference type="Gene3D" id="2.60.120.40">
    <property type="match status" value="1"/>
</dbReference>
<dbReference type="InterPro" id="IPR006053">
    <property type="entry name" value="TNF"/>
</dbReference>
<dbReference type="InterPro" id="IPR002959">
    <property type="entry name" value="TNF_alpha"/>
</dbReference>
<dbReference type="InterPro" id="IPR021184">
    <property type="entry name" value="TNF_CS"/>
</dbReference>
<dbReference type="InterPro" id="IPR006052">
    <property type="entry name" value="TNF_dom"/>
</dbReference>
<dbReference type="InterPro" id="IPR008983">
    <property type="entry name" value="Tumour_necrosis_fac-like_dom"/>
</dbReference>
<dbReference type="PANTHER" id="PTHR11471:SF23">
    <property type="entry name" value="TUMOR NECROSIS FACTOR"/>
    <property type="match status" value="1"/>
</dbReference>
<dbReference type="PANTHER" id="PTHR11471">
    <property type="entry name" value="TUMOR NECROSIS FACTOR FAMILY MEMBER"/>
    <property type="match status" value="1"/>
</dbReference>
<dbReference type="Pfam" id="PF00229">
    <property type="entry name" value="TNF"/>
    <property type="match status" value="1"/>
</dbReference>
<dbReference type="PRINTS" id="PR01234">
    <property type="entry name" value="TNECROSISFCT"/>
</dbReference>
<dbReference type="PRINTS" id="PR01235">
    <property type="entry name" value="TNFALPHA"/>
</dbReference>
<dbReference type="SMART" id="SM00207">
    <property type="entry name" value="TNF"/>
    <property type="match status" value="1"/>
</dbReference>
<dbReference type="SUPFAM" id="SSF49842">
    <property type="entry name" value="TNF-like"/>
    <property type="match status" value="1"/>
</dbReference>
<dbReference type="PROSITE" id="PS00251">
    <property type="entry name" value="THD_1"/>
    <property type="match status" value="1"/>
</dbReference>
<dbReference type="PROSITE" id="PS50049">
    <property type="entry name" value="THD_2"/>
    <property type="match status" value="1"/>
</dbReference>
<reference key="1">
    <citation type="journal article" date="2002" name="Immunol. Rev.">
        <title>Comparative genomic analysis of the MHC: the evolution of class I duplication blocks, diversity and complexity from shark to man.</title>
        <authorList>
            <person name="Kulski J.K."/>
            <person name="Shiina T."/>
            <person name="Anzai T."/>
            <person name="Kohara S."/>
            <person name="Inoko H."/>
        </authorList>
    </citation>
    <scope>NUCLEOTIDE SEQUENCE [GENOMIC DNA]</scope>
</reference>
<reference key="2">
    <citation type="journal article" date="2003" name="Proc. Natl. Acad. Sci. U.S.A.">
        <title>Comparative sequencing of human and chimpanzee MHC class I regions unveils insertions/deletions as the major path to genomic divergence.</title>
        <authorList>
            <person name="Anzai T."/>
            <person name="Shiina T."/>
            <person name="Kimura N."/>
            <person name="Yanagiya K."/>
            <person name="Kohara S."/>
            <person name="Shigenari A."/>
            <person name="Yamagata T."/>
            <person name="Kulski J.K."/>
            <person name="Naruse T.K."/>
            <person name="Fujimori Y."/>
            <person name="Fukuzumi Y."/>
            <person name="Yamazaki M."/>
            <person name="Tashiro H."/>
            <person name="Iwamoto C."/>
            <person name="Umehara Y."/>
            <person name="Imanishi T."/>
            <person name="Meyer A."/>
            <person name="Ikeo K."/>
            <person name="Gojobori T."/>
            <person name="Bahram S."/>
            <person name="Inoko H."/>
        </authorList>
    </citation>
    <scope>NUCLEOTIDE SEQUENCE [LARGE SCALE GENOMIC DNA]</scope>
</reference>
<reference key="3">
    <citation type="journal article" date="2006" name="Genetics">
        <title>Rapid evolution of major histocompatibility complex class I genes in primates generates new disease alleles in humans via hitchhiking diversity.</title>
        <authorList>
            <person name="Shiina T."/>
            <person name="Ota M."/>
            <person name="Shimizu S."/>
            <person name="Katsuyama Y."/>
            <person name="Hashimoto N."/>
            <person name="Takasu M."/>
            <person name="Anzai T."/>
            <person name="Kulski J.K."/>
            <person name="Kikkawa E."/>
            <person name="Naruse T."/>
            <person name="Kimura N."/>
            <person name="Yanagiya K."/>
            <person name="Watanabe A."/>
            <person name="Hosomichi K."/>
            <person name="Kohara S."/>
            <person name="Iwamoto C."/>
            <person name="Umehara Y."/>
            <person name="Meyer A."/>
            <person name="Wanner V."/>
            <person name="Sano K."/>
            <person name="Macquin C."/>
            <person name="Ikeo K."/>
            <person name="Tokunaga K."/>
            <person name="Gojobori T."/>
            <person name="Inoko H."/>
            <person name="Bahram S."/>
        </authorList>
    </citation>
    <scope>NUCLEOTIDE SEQUENCE [LARGE SCALE GENOMIC DNA]</scope>
</reference>
<reference key="4">
    <citation type="submission" date="2002-03" db="EMBL/GenBank/DDBJ databases">
        <title>Molecular evolution in higher primates; gene specific and organism specific characteristics.</title>
        <authorList>
            <person name="O'Huigin C."/>
            <person name="Tichy H."/>
            <person name="Klein J."/>
        </authorList>
    </citation>
    <scope>NUCLEOTIDE SEQUENCE [GENOMIC DNA] OF 33-186</scope>
</reference>
<feature type="chain" id="PRO_0000034437" description="Tumor necrosis factor, membrane form">
    <location>
        <begin position="1"/>
        <end position="232"/>
    </location>
</feature>
<feature type="chain" id="PRO_0000417259" description="Intracellular domain 1" evidence="1">
    <location>
        <begin position="1"/>
        <end position="39"/>
    </location>
</feature>
<feature type="chain" id="PRO_0000417260" description="Intracellular domain 2" evidence="1">
    <location>
        <begin position="1"/>
        <end position="35"/>
    </location>
</feature>
<feature type="chain" id="PRO_0000417261" description="C-domain 1" evidence="1">
    <location>
        <begin position="50"/>
        <end status="unknown"/>
    </location>
</feature>
<feature type="chain" id="PRO_0000417262" description="C-domain 2" evidence="1">
    <location>
        <begin position="52"/>
        <end status="unknown"/>
    </location>
</feature>
<feature type="chain" id="PRO_0000034438" description="Tumor necrosis factor, soluble form" evidence="1">
    <location>
        <begin position="77"/>
        <end position="232"/>
    </location>
</feature>
<feature type="topological domain" description="Cytoplasmic" evidence="4">
    <location>
        <begin position="1"/>
        <end position="34"/>
    </location>
</feature>
<feature type="transmembrane region" description="Helical; Signal-anchor for type II membrane protein" evidence="1">
    <location>
        <begin position="35"/>
        <end position="57"/>
    </location>
</feature>
<feature type="topological domain" description="Extracellular" evidence="4">
    <location>
        <begin position="58"/>
        <end position="232"/>
    </location>
</feature>
<feature type="domain" description="THD" evidence="5">
    <location>
        <begin position="87"/>
        <end position="232"/>
    </location>
</feature>
<feature type="site" description="Cleavage; by SPPL2A or SPPL2B" evidence="1">
    <location>
        <begin position="34"/>
        <end position="35"/>
    </location>
</feature>
<feature type="site" description="Cleavage; by SPPL2A or SPPL2B" evidence="1">
    <location>
        <begin position="39"/>
        <end position="40"/>
    </location>
</feature>
<feature type="site" description="Cleavage; by SPPL2A or SPPL2B" evidence="1">
    <location>
        <begin position="49"/>
        <end position="50"/>
    </location>
</feature>
<feature type="site" description="Cleavage; by SPPL2A or SPPL2B" evidence="1">
    <location>
        <begin position="51"/>
        <end position="52"/>
    </location>
</feature>
<feature type="site" description="Cleavage; by ADAM17" evidence="1">
    <location>
        <begin position="76"/>
        <end position="77"/>
    </location>
</feature>
<feature type="modified residue" description="Phosphoserine; by CK1" evidence="1">
    <location>
        <position position="2"/>
    </location>
</feature>
<feature type="lipid moiety-binding region" description="N6-myristoyl lysine" evidence="2">
    <location>
        <position position="19"/>
    </location>
</feature>
<feature type="lipid moiety-binding region" description="N6-myristoyl lysine" evidence="2">
    <location>
        <position position="20"/>
    </location>
</feature>
<feature type="glycosylation site" description="O-linked (GalNAc...) serine; in soluble form" evidence="1">
    <location>
        <position position="79"/>
    </location>
</feature>
<feature type="disulfide bond" evidence="5">
    <location>
        <begin position="144"/>
        <end position="176"/>
    </location>
</feature>
<feature type="sequence conflict" description="In Ref. 3 and 4." evidence="6" ref="3 4">
    <original>G</original>
    <variation>VR</variation>
    <location>
        <position position="77"/>
    </location>
</feature>
<name>TNFA_PANTR</name>
<gene>
    <name type="primary">TNF</name>
    <name type="synonym">TNFA</name>
    <name type="synonym">TNFSF2</name>
</gene>
<evidence type="ECO:0000250" key="1"/>
<evidence type="ECO:0000250" key="2">
    <source>
        <dbReference type="UniProtKB" id="P01375"/>
    </source>
</evidence>
<evidence type="ECO:0000250" key="3">
    <source>
        <dbReference type="UniProtKB" id="P06804"/>
    </source>
</evidence>
<evidence type="ECO:0000255" key="4"/>
<evidence type="ECO:0000255" key="5">
    <source>
        <dbReference type="PROSITE-ProRule" id="PRU01387"/>
    </source>
</evidence>
<evidence type="ECO:0000305" key="6"/>
<accession>Q8HZD9</accession>
<accession>Q1XHZ6</accession>
<comment type="function">
    <text evidence="2 3">Cytokine that binds to TNFRSF1A/TNFR1 and TNFRSF1B/TNFBR. It is mainly secreted by macrophages and can induce cell death of certain tumor cell lines. It is potent pyrogen causing fever by direct action or by stimulation of interleukin-1 secretion and is implicated in the induction of cachexia, Under certain conditions it can stimulate cell proliferation and induce cell differentiation (By similarity). Induces insulin resistance in adipocytes via inhibition of insulin-induced IRS1 tyrosine phosphorylation and insulin-induced glucose uptake. Induces GKAP42 protein degradation in adipocytes which is partially responsible for TNF-induced insulin resistance (By similarity). Plays a role in angiogenesis by inducing VEGF production synergistically with IL1B and IL6 (By similarity). Promotes osteoclastogenesis and therefore mediates bone resorption (By similarity).</text>
</comment>
<comment type="function">
    <text evidence="2">The TNF intracellular domain (ICD) form induces IL12 production in dendritic cells.</text>
</comment>
<comment type="subunit">
    <text evidence="1">Homotrimer. Interacts with SPPL2B (By similarity).</text>
</comment>
<comment type="subcellular location">
    <subcellularLocation>
        <location evidence="1">Cell membrane</location>
        <topology evidence="1">Single-pass type II membrane protein</topology>
    </subcellularLocation>
</comment>
<comment type="subcellular location">
    <molecule>Tumor necrosis factor, membrane form</molecule>
    <subcellularLocation>
        <location evidence="1">Membrane</location>
        <topology evidence="1">Single-pass type II membrane protein</topology>
    </subcellularLocation>
</comment>
<comment type="subcellular location">
    <molecule>Tumor necrosis factor, soluble form</molecule>
    <subcellularLocation>
        <location evidence="1">Secreted</location>
    </subcellularLocation>
</comment>
<comment type="subcellular location">
    <molecule>C-domain 1</molecule>
    <subcellularLocation>
        <location evidence="1">Secreted</location>
    </subcellularLocation>
</comment>
<comment type="subcellular location">
    <molecule>C-domain 2</molecule>
    <subcellularLocation>
        <location evidence="1">Secreted</location>
    </subcellularLocation>
</comment>
<comment type="PTM">
    <text evidence="1">The soluble form derives from the membrane form by proteolytic processing. The membrane-bound form is further proteolytically processed by SPPL2A or SPPL2B through regulated intramembrane proteolysis producing TNF intracellular domains (ICD1 and ICD2) released in the cytosol and TNF C-domain 1 and C-domain 2 secreted into the extracellular space (By similarity).</text>
</comment>
<comment type="PTM">
    <text evidence="1">The membrane form, but not the soluble form, is phosphorylated on serine residues. Dephosphorylation of the membrane form occurs by binding to soluble TNFRSF1A/TNFR1 (By similarity).</text>
</comment>
<comment type="PTM">
    <text evidence="1">O-glycosylated; glycans contain galactose, N-acetylgalactosamine and N-acetylneuraminic acid.</text>
</comment>
<comment type="PTM">
    <molecule>Tumor necrosis factor, soluble form</molecule>
    <text evidence="2">The soluble form is demyristoylated by SIRT6, promoting its secretion.</text>
</comment>
<comment type="similarity">
    <text evidence="6">Belongs to the tumor necrosis factor family.</text>
</comment>
<sequence length="232" mass="25446">MSTESMIRDVELAEEALPKKTGGPQGSRRCLFLSLFSFLIVAGATTLFCLLHFGVIGPQREEFPRDLSLISPLAQAGSSSRTPSDKPVAHVVANPQAEGQLQWLNRRANALLANGVELRDNQLVVPSEGLYLIYSQVLFKGQGCPSTHVLLTHTISRIAVSYQTKVNLLSAIKSPCQRETPEGAEAKPWYEPIYLGGVFQLEKGDRLSAEINRPDYLDFAESGQVYFGIIAL</sequence>
<keyword id="KW-1003">Cell membrane</keyword>
<keyword id="KW-0202">Cytokine</keyword>
<keyword id="KW-1015">Disulfide bond</keyword>
<keyword id="KW-0325">Glycoprotein</keyword>
<keyword id="KW-0449">Lipoprotein</keyword>
<keyword id="KW-0472">Membrane</keyword>
<keyword id="KW-0519">Myristate</keyword>
<keyword id="KW-0597">Phosphoprotein</keyword>
<keyword id="KW-1185">Reference proteome</keyword>
<keyword id="KW-0964">Secreted</keyword>
<keyword id="KW-0735">Signal-anchor</keyword>
<keyword id="KW-0812">Transmembrane</keyword>
<keyword id="KW-1133">Transmembrane helix</keyword>